<gene>
    <name evidence="1" type="primary">glyA</name>
    <name type="ordered locus">CGSHiEE_07580</name>
</gene>
<comment type="function">
    <text evidence="1">Catalyzes the reversible interconversion of serine and glycine with tetrahydrofolate (THF) serving as the one-carbon carrier. This reaction serves as the major source of one-carbon groups required for the biosynthesis of purines, thymidylate, methionine, and other important biomolecules. Also exhibits THF-independent aldolase activity toward beta-hydroxyamino acids, producing glycine and aldehydes, via a retro-aldol mechanism.</text>
</comment>
<comment type="catalytic activity">
    <reaction evidence="1">
        <text>(6R)-5,10-methylene-5,6,7,8-tetrahydrofolate + glycine + H2O = (6S)-5,6,7,8-tetrahydrofolate + L-serine</text>
        <dbReference type="Rhea" id="RHEA:15481"/>
        <dbReference type="ChEBI" id="CHEBI:15377"/>
        <dbReference type="ChEBI" id="CHEBI:15636"/>
        <dbReference type="ChEBI" id="CHEBI:33384"/>
        <dbReference type="ChEBI" id="CHEBI:57305"/>
        <dbReference type="ChEBI" id="CHEBI:57453"/>
        <dbReference type="EC" id="2.1.2.1"/>
    </reaction>
</comment>
<comment type="cofactor">
    <cofactor evidence="1">
        <name>pyridoxal 5'-phosphate</name>
        <dbReference type="ChEBI" id="CHEBI:597326"/>
    </cofactor>
</comment>
<comment type="pathway">
    <text evidence="1">One-carbon metabolism; tetrahydrofolate interconversion.</text>
</comment>
<comment type="pathway">
    <text evidence="1">Amino-acid biosynthesis; glycine biosynthesis; glycine from L-serine: step 1/1.</text>
</comment>
<comment type="subunit">
    <text evidence="1">Homodimer.</text>
</comment>
<comment type="subcellular location">
    <subcellularLocation>
        <location evidence="1">Cytoplasm</location>
    </subcellularLocation>
</comment>
<comment type="similarity">
    <text evidence="1">Belongs to the SHMT family.</text>
</comment>
<sequence length="421" mass="45916">MFTRNMTIADYDPVLWQAIQDENRRQEEHIELIASENYASPRVMEAQGSQFTNKYAEGYPGKRYYGGCEYADIVEQLAIDRAKELFGADYVNVQPHSGSQANAAVYGALINAGDTILGMDLAHGGHLTHGAKVSFSGKIYNSVLYGITADGLIDYEDVRQKALECKPKLIVAGFSAYSQVVDWAKMREIADEVGAYLFVDMAHVAGLIAAGLYPNPLPHAHVVTTTTHKTLGGPRGGLILSSCGDEEIYKKLQSSVFPANQGGPLVHIIAAKAVCFKEALEPQYKEYQANVIKNAKAMVEVFKQRGYDVVSNGTENHLFLVSFIKQGLTGKAADAALGKANITVNKNAVPNDPQKPFVTSGIRVGTPSVTRRGSNENDVRELAGWMCDVLDALGKENEEQVIAETKEKVLAICKRLPVYPK</sequence>
<dbReference type="EC" id="2.1.2.1" evidence="1"/>
<dbReference type="EMBL" id="CP000671">
    <property type="protein sequence ID" value="ABQ98835.1"/>
    <property type="molecule type" value="Genomic_DNA"/>
</dbReference>
<dbReference type="SMR" id="A5UDI4"/>
<dbReference type="KEGG" id="hip:CGSHiEE_07580"/>
<dbReference type="HOGENOM" id="CLU_022477_2_1_6"/>
<dbReference type="UniPathway" id="UPA00193"/>
<dbReference type="UniPathway" id="UPA00288">
    <property type="reaction ID" value="UER01023"/>
</dbReference>
<dbReference type="GO" id="GO:0005829">
    <property type="term" value="C:cytosol"/>
    <property type="evidence" value="ECO:0007669"/>
    <property type="project" value="TreeGrafter"/>
</dbReference>
<dbReference type="GO" id="GO:0004372">
    <property type="term" value="F:glycine hydroxymethyltransferase activity"/>
    <property type="evidence" value="ECO:0007669"/>
    <property type="project" value="UniProtKB-UniRule"/>
</dbReference>
<dbReference type="GO" id="GO:0030170">
    <property type="term" value="F:pyridoxal phosphate binding"/>
    <property type="evidence" value="ECO:0007669"/>
    <property type="project" value="UniProtKB-UniRule"/>
</dbReference>
<dbReference type="GO" id="GO:0019264">
    <property type="term" value="P:glycine biosynthetic process from serine"/>
    <property type="evidence" value="ECO:0007669"/>
    <property type="project" value="UniProtKB-UniRule"/>
</dbReference>
<dbReference type="GO" id="GO:0035999">
    <property type="term" value="P:tetrahydrofolate interconversion"/>
    <property type="evidence" value="ECO:0007669"/>
    <property type="project" value="UniProtKB-UniRule"/>
</dbReference>
<dbReference type="CDD" id="cd00378">
    <property type="entry name" value="SHMT"/>
    <property type="match status" value="1"/>
</dbReference>
<dbReference type="FunFam" id="3.40.640.10:FF:000001">
    <property type="entry name" value="Serine hydroxymethyltransferase"/>
    <property type="match status" value="1"/>
</dbReference>
<dbReference type="FunFam" id="3.90.1150.10:FF:000003">
    <property type="entry name" value="Serine hydroxymethyltransferase"/>
    <property type="match status" value="1"/>
</dbReference>
<dbReference type="Gene3D" id="3.90.1150.10">
    <property type="entry name" value="Aspartate Aminotransferase, domain 1"/>
    <property type="match status" value="1"/>
</dbReference>
<dbReference type="Gene3D" id="3.40.640.10">
    <property type="entry name" value="Type I PLP-dependent aspartate aminotransferase-like (Major domain)"/>
    <property type="match status" value="1"/>
</dbReference>
<dbReference type="HAMAP" id="MF_00051">
    <property type="entry name" value="SHMT"/>
    <property type="match status" value="1"/>
</dbReference>
<dbReference type="InterPro" id="IPR015424">
    <property type="entry name" value="PyrdxlP-dep_Trfase"/>
</dbReference>
<dbReference type="InterPro" id="IPR015421">
    <property type="entry name" value="PyrdxlP-dep_Trfase_major"/>
</dbReference>
<dbReference type="InterPro" id="IPR015422">
    <property type="entry name" value="PyrdxlP-dep_Trfase_small"/>
</dbReference>
<dbReference type="InterPro" id="IPR001085">
    <property type="entry name" value="Ser_HO-MeTrfase"/>
</dbReference>
<dbReference type="InterPro" id="IPR049943">
    <property type="entry name" value="Ser_HO-MeTrfase-like"/>
</dbReference>
<dbReference type="InterPro" id="IPR019798">
    <property type="entry name" value="Ser_HO-MeTrfase_PLP_BS"/>
</dbReference>
<dbReference type="InterPro" id="IPR039429">
    <property type="entry name" value="SHMT-like_dom"/>
</dbReference>
<dbReference type="NCBIfam" id="NF000586">
    <property type="entry name" value="PRK00011.1"/>
    <property type="match status" value="1"/>
</dbReference>
<dbReference type="PANTHER" id="PTHR11680">
    <property type="entry name" value="SERINE HYDROXYMETHYLTRANSFERASE"/>
    <property type="match status" value="1"/>
</dbReference>
<dbReference type="PANTHER" id="PTHR11680:SF50">
    <property type="entry name" value="SERINE HYDROXYMETHYLTRANSFERASE"/>
    <property type="match status" value="1"/>
</dbReference>
<dbReference type="Pfam" id="PF00464">
    <property type="entry name" value="SHMT"/>
    <property type="match status" value="1"/>
</dbReference>
<dbReference type="PIRSF" id="PIRSF000412">
    <property type="entry name" value="SHMT"/>
    <property type="match status" value="1"/>
</dbReference>
<dbReference type="SUPFAM" id="SSF53383">
    <property type="entry name" value="PLP-dependent transferases"/>
    <property type="match status" value="1"/>
</dbReference>
<dbReference type="PROSITE" id="PS00096">
    <property type="entry name" value="SHMT"/>
    <property type="match status" value="1"/>
</dbReference>
<protein>
    <recommendedName>
        <fullName evidence="1">Serine hydroxymethyltransferase</fullName>
        <shortName evidence="1">SHMT</shortName>
        <shortName evidence="1">Serine methylase</shortName>
        <ecNumber evidence="1">2.1.2.1</ecNumber>
    </recommendedName>
</protein>
<reference key="1">
    <citation type="journal article" date="2007" name="Genome Biol.">
        <title>Characterization and modeling of the Haemophilus influenzae core and supragenomes based on the complete genomic sequences of Rd and 12 clinical nontypeable strains.</title>
        <authorList>
            <person name="Hogg J.S."/>
            <person name="Hu F.Z."/>
            <person name="Janto B."/>
            <person name="Boissy R."/>
            <person name="Hayes J."/>
            <person name="Keefe R."/>
            <person name="Post J.C."/>
            <person name="Ehrlich G.D."/>
        </authorList>
    </citation>
    <scope>NUCLEOTIDE SEQUENCE [LARGE SCALE GENOMIC DNA]</scope>
    <source>
        <strain>PittEE</strain>
    </source>
</reference>
<proteinExistence type="inferred from homology"/>
<name>GLYA_HAEIE</name>
<keyword id="KW-0028">Amino-acid biosynthesis</keyword>
<keyword id="KW-0963">Cytoplasm</keyword>
<keyword id="KW-0554">One-carbon metabolism</keyword>
<keyword id="KW-0663">Pyridoxal phosphate</keyword>
<keyword id="KW-0808">Transferase</keyword>
<feature type="chain" id="PRO_1000006258" description="Serine hydroxymethyltransferase">
    <location>
        <begin position="1"/>
        <end position="421"/>
    </location>
</feature>
<feature type="binding site" evidence="1">
    <location>
        <position position="121"/>
    </location>
    <ligand>
        <name>(6S)-5,6,7,8-tetrahydrofolate</name>
        <dbReference type="ChEBI" id="CHEBI:57453"/>
    </ligand>
</feature>
<feature type="binding site" evidence="1">
    <location>
        <begin position="125"/>
        <end position="127"/>
    </location>
    <ligand>
        <name>(6S)-5,6,7,8-tetrahydrofolate</name>
        <dbReference type="ChEBI" id="CHEBI:57453"/>
    </ligand>
</feature>
<feature type="site" description="Plays an important role in substrate specificity" evidence="1">
    <location>
        <position position="228"/>
    </location>
</feature>
<feature type="modified residue" description="N6-(pyridoxal phosphate)lysine" evidence="1">
    <location>
        <position position="229"/>
    </location>
</feature>
<organism>
    <name type="scientific">Haemophilus influenzae (strain PittEE)</name>
    <dbReference type="NCBI Taxonomy" id="374930"/>
    <lineage>
        <taxon>Bacteria</taxon>
        <taxon>Pseudomonadati</taxon>
        <taxon>Pseudomonadota</taxon>
        <taxon>Gammaproteobacteria</taxon>
        <taxon>Pasteurellales</taxon>
        <taxon>Pasteurellaceae</taxon>
        <taxon>Haemophilus</taxon>
    </lineage>
</organism>
<evidence type="ECO:0000255" key="1">
    <source>
        <dbReference type="HAMAP-Rule" id="MF_00051"/>
    </source>
</evidence>
<accession>A5UDI4</accession>